<gene>
    <name type="primary">MBF1A</name>
    <name type="ordered locus">At2g42680</name>
    <name type="ORF">F14N22.5</name>
</gene>
<reference key="1">
    <citation type="journal article" date="1999" name="Nature">
        <title>Sequence and analysis of chromosome 2 of the plant Arabidopsis thaliana.</title>
        <authorList>
            <person name="Lin X."/>
            <person name="Kaul S."/>
            <person name="Rounsley S.D."/>
            <person name="Shea T.P."/>
            <person name="Benito M.-I."/>
            <person name="Town C.D."/>
            <person name="Fujii C.Y."/>
            <person name="Mason T.M."/>
            <person name="Bowman C.L."/>
            <person name="Barnstead M.E."/>
            <person name="Feldblyum T.V."/>
            <person name="Buell C.R."/>
            <person name="Ketchum K.A."/>
            <person name="Lee J.J."/>
            <person name="Ronning C.M."/>
            <person name="Koo H.L."/>
            <person name="Moffat K.S."/>
            <person name="Cronin L.A."/>
            <person name="Shen M."/>
            <person name="Pai G."/>
            <person name="Van Aken S."/>
            <person name="Umayam L."/>
            <person name="Tallon L.J."/>
            <person name="Gill J.E."/>
            <person name="Adams M.D."/>
            <person name="Carrera A.J."/>
            <person name="Creasy T.H."/>
            <person name="Goodman H.M."/>
            <person name="Somerville C.R."/>
            <person name="Copenhaver G.P."/>
            <person name="Preuss D."/>
            <person name="Nierman W.C."/>
            <person name="White O."/>
            <person name="Eisen J.A."/>
            <person name="Salzberg S.L."/>
            <person name="Fraser C.M."/>
            <person name="Venter J.C."/>
        </authorList>
    </citation>
    <scope>NUCLEOTIDE SEQUENCE [LARGE SCALE GENOMIC DNA]</scope>
    <source>
        <strain>cv. Columbia</strain>
    </source>
</reference>
<reference key="2">
    <citation type="journal article" date="2017" name="Plant J.">
        <title>Araport11: a complete reannotation of the Arabidopsis thaliana reference genome.</title>
        <authorList>
            <person name="Cheng C.Y."/>
            <person name="Krishnakumar V."/>
            <person name="Chan A.P."/>
            <person name="Thibaud-Nissen F."/>
            <person name="Schobel S."/>
            <person name="Town C.D."/>
        </authorList>
    </citation>
    <scope>GENOME REANNOTATION</scope>
    <source>
        <strain>cv. Columbia</strain>
    </source>
</reference>
<reference key="3">
    <citation type="journal article" date="2003" name="Science">
        <title>Empirical analysis of transcriptional activity in the Arabidopsis genome.</title>
        <authorList>
            <person name="Yamada K."/>
            <person name="Lim J."/>
            <person name="Dale J.M."/>
            <person name="Chen H."/>
            <person name="Shinn P."/>
            <person name="Palm C.J."/>
            <person name="Southwick A.M."/>
            <person name="Wu H.C."/>
            <person name="Kim C.J."/>
            <person name="Nguyen M."/>
            <person name="Pham P.K."/>
            <person name="Cheuk R.F."/>
            <person name="Karlin-Newmann G."/>
            <person name="Liu S.X."/>
            <person name="Lam B."/>
            <person name="Sakano H."/>
            <person name="Wu T."/>
            <person name="Yu G."/>
            <person name="Miranda M."/>
            <person name="Quach H.L."/>
            <person name="Tripp M."/>
            <person name="Chang C.H."/>
            <person name="Lee J.M."/>
            <person name="Toriumi M.J."/>
            <person name="Chan M.M."/>
            <person name="Tang C.C."/>
            <person name="Onodera C.S."/>
            <person name="Deng J.M."/>
            <person name="Akiyama K."/>
            <person name="Ansari Y."/>
            <person name="Arakawa T."/>
            <person name="Banh J."/>
            <person name="Banno F."/>
            <person name="Bowser L."/>
            <person name="Brooks S.Y."/>
            <person name="Carninci P."/>
            <person name="Chao Q."/>
            <person name="Choy N."/>
            <person name="Enju A."/>
            <person name="Goldsmith A.D."/>
            <person name="Gurjal M."/>
            <person name="Hansen N.F."/>
            <person name="Hayashizaki Y."/>
            <person name="Johnson-Hopson C."/>
            <person name="Hsuan V.W."/>
            <person name="Iida K."/>
            <person name="Karnes M."/>
            <person name="Khan S."/>
            <person name="Koesema E."/>
            <person name="Ishida J."/>
            <person name="Jiang P.X."/>
            <person name="Jones T."/>
            <person name="Kawai J."/>
            <person name="Kamiya A."/>
            <person name="Meyers C."/>
            <person name="Nakajima M."/>
            <person name="Narusaka M."/>
            <person name="Seki M."/>
            <person name="Sakurai T."/>
            <person name="Satou M."/>
            <person name="Tamse R."/>
            <person name="Vaysberg M."/>
            <person name="Wallender E.K."/>
            <person name="Wong C."/>
            <person name="Yamamura Y."/>
            <person name="Yuan S."/>
            <person name="Shinozaki K."/>
            <person name="Davis R.W."/>
            <person name="Theologis A."/>
            <person name="Ecker J.R."/>
        </authorList>
    </citation>
    <scope>NUCLEOTIDE SEQUENCE [LARGE SCALE MRNA]</scope>
    <source>
        <strain>cv. Columbia</strain>
    </source>
</reference>
<reference key="4">
    <citation type="submission" date="2002-03" db="EMBL/GenBank/DDBJ databases">
        <title>Full-length cDNA from Arabidopsis thaliana.</title>
        <authorList>
            <person name="Brover V.V."/>
            <person name="Troukhan M.E."/>
            <person name="Alexandrov N.A."/>
            <person name="Lu Y.-P."/>
            <person name="Flavell R.B."/>
            <person name="Feldmann K.A."/>
        </authorList>
    </citation>
    <scope>NUCLEOTIDE SEQUENCE [LARGE SCALE MRNA]</scope>
</reference>
<reference key="5">
    <citation type="journal article" date="2004" name="Plant Cell Physiol.">
        <title>Three Arabidopsis MBF1 homologs with distinct expression profiles play roles as transcriptional co-activators.</title>
        <authorList>
            <person name="Tsuda K."/>
            <person name="Tsuji T."/>
            <person name="Hirose S."/>
            <person name="Yamazaki K."/>
        </authorList>
    </citation>
    <scope>FUNCTION</scope>
    <scope>TISSUE SPECIFICITY</scope>
    <scope>INDUCTION</scope>
</reference>
<reference key="6">
    <citation type="journal article" date="2004" name="Biochim. Biophys. Acta">
        <title>Structure and expression analysis of three subtypes of Arabidopsis MBF1 genes.</title>
        <authorList>
            <person name="Tsuda K."/>
            <person name="Yamazaki K."/>
        </authorList>
    </citation>
    <scope>TISSUE SPECIFICITY</scope>
    <scope>DEVELOPMENTAL STAGE</scope>
    <scope>INDUCTION</scope>
</reference>
<reference key="7">
    <citation type="journal article" date="2005" name="J. Plant Res.">
        <title>Transcriptional coactivator MBF1s from Arabidopsis predominantly localize in nucleolus.</title>
        <authorList>
            <person name="Sugikawa Y."/>
            <person name="Ebihara S."/>
            <person name="Tsuda K."/>
            <person name="Niwa Y."/>
            <person name="Yamazaki K."/>
        </authorList>
    </citation>
    <scope>SUBCELLULAR LOCATION</scope>
</reference>
<reference key="8">
    <citation type="journal article" date="2005" name="Plant Physiol.">
        <title>Enhanced tolerance to environmental stress in transgenic plants expressing the transcriptional coactivator multiprotein bridging factor 1c.</title>
        <authorList>
            <person name="Suzuki N."/>
            <person name="Rizhsky L."/>
            <person name="Liang H."/>
            <person name="Shuman J."/>
            <person name="Shulaev V."/>
            <person name="Mittler R."/>
        </authorList>
    </citation>
    <scope>INDUCTION</scope>
</reference>
<reference key="9">
    <citation type="journal article" date="2007" name="Biochem. Biophys. Res. Commun.">
        <title>Abiotic and biotic stress tolerance in Arabidopsis overexpressing the multiprotein bridging factor 1a (MBF1a) transcriptional coactivator gene.</title>
        <authorList>
            <person name="Kim M.-J."/>
            <person name="Lim G.-H."/>
            <person name="Kim E.-S."/>
            <person name="Ko C.-B."/>
            <person name="Yang K.-Y."/>
            <person name="Jeong J.-A."/>
            <person name="Lee M.-C."/>
            <person name="Kim C.S."/>
        </authorList>
    </citation>
    <scope>INDUCTION BY SALT STRESS</scope>
    <scope>INDUCTION BY PATHOGEN INFECTION</scope>
</reference>
<proteinExistence type="evidence at transcript level"/>
<keyword id="KW-0010">Activator</keyword>
<keyword id="KW-0238">DNA-binding</keyword>
<keyword id="KW-0539">Nucleus</keyword>
<keyword id="KW-1185">Reference proteome</keyword>
<keyword id="KW-0804">Transcription</keyword>
<keyword id="KW-0805">Transcription regulation</keyword>
<protein>
    <recommendedName>
        <fullName>Multiprotein-bridging factor 1a</fullName>
    </recommendedName>
</protein>
<sequence>MAGIGPITQDWEPVVIRKKPANAAAKRDEKTVNAARRSGADIETVRKFNAGTNKAASSGTSLNTKMLDDDTENLTHERVPTELKKAIMQARTDKKLTQSQLAQIINEKPQVIQEYESGKAIPNQQILSKLERALGAKLRGKK</sequence>
<evidence type="ECO:0000250" key="1"/>
<evidence type="ECO:0000255" key="2">
    <source>
        <dbReference type="PROSITE-ProRule" id="PRU00257"/>
    </source>
</evidence>
<evidence type="ECO:0000256" key="3">
    <source>
        <dbReference type="SAM" id="MobiDB-lite"/>
    </source>
</evidence>
<evidence type="ECO:0000269" key="4">
    <source>
    </source>
</evidence>
<evidence type="ECO:0000269" key="5">
    <source>
    </source>
</evidence>
<evidence type="ECO:0000269" key="6">
    <source>
    </source>
</evidence>
<evidence type="ECO:0000269" key="7">
    <source>
    </source>
</evidence>
<evidence type="ECO:0000269" key="8">
    <source>
    </source>
</evidence>
<evidence type="ECO:0000305" key="9"/>
<name>MBF1A_ARATH</name>
<comment type="function">
    <text evidence="1 4">Transcriptional coactivator that stimulates transcriptional activity by bridging regulatory proteins and TBP, thereby recruiting TBP to promoters occupied by DNA-binding regulators.</text>
</comment>
<comment type="subcellular location">
    <subcellularLocation>
        <location evidence="7">Nucleus</location>
        <location evidence="7">Nucleolus</location>
    </subcellularLocation>
</comment>
<comment type="tissue specificity">
    <text evidence="4 5">Expressed in leaves, roots, stems, flowers, siliques and shoots. Detected only in anthers and some seeds in siliques.</text>
</comment>
<comment type="developmental stage">
    <text evidence="5">Detected in some seeds from 3 days after pollination (dap) to 11 dap.</text>
</comment>
<comment type="induction">
    <text evidence="4 5 6 8">Not induced by heat or cold treatments, H(2)O(2), dehydration, abscisic acid, 2,4-D, ACC, methyl jasmonate or salicylic acid. Weak induction by salt stress and pathogen induction.</text>
</comment>
<comment type="domain">
    <text>The C-terminal domain (75-142) is essential for nucleolar localization.</text>
</comment>
<comment type="similarity">
    <text evidence="9">Belongs to the MBF1 family.</text>
</comment>
<feature type="chain" id="PRO_0000325903" description="Multiprotein-bridging factor 1a">
    <location>
        <begin position="1"/>
        <end position="142"/>
    </location>
</feature>
<feature type="domain" description="HTH cro/C1-type" evidence="2">
    <location>
        <begin position="87"/>
        <end position="141"/>
    </location>
</feature>
<feature type="DNA-binding region" description="H-T-H motif" evidence="2">
    <location>
        <begin position="98"/>
        <end position="117"/>
    </location>
</feature>
<feature type="region of interest" description="Disordered" evidence="3">
    <location>
        <begin position="51"/>
        <end position="77"/>
    </location>
</feature>
<feature type="compositionally biased region" description="Polar residues" evidence="3">
    <location>
        <begin position="51"/>
        <end position="64"/>
    </location>
</feature>
<accession>Q9SJI8</accession>
<dbReference type="EMBL" id="AC006931">
    <property type="protein sequence ID" value="AAD21738.1"/>
    <property type="molecule type" value="Genomic_DNA"/>
</dbReference>
<dbReference type="EMBL" id="AC007087">
    <property type="protein sequence ID" value="AAM15391.1"/>
    <property type="molecule type" value="Genomic_DNA"/>
</dbReference>
<dbReference type="EMBL" id="CP002685">
    <property type="protein sequence ID" value="AEC10155.1"/>
    <property type="molecule type" value="Genomic_DNA"/>
</dbReference>
<dbReference type="EMBL" id="AF370280">
    <property type="protein sequence ID" value="AAK44095.1"/>
    <property type="molecule type" value="mRNA"/>
</dbReference>
<dbReference type="EMBL" id="AY063014">
    <property type="protein sequence ID" value="AAL34188.1"/>
    <property type="molecule type" value="mRNA"/>
</dbReference>
<dbReference type="EMBL" id="AY088140">
    <property type="protein sequence ID" value="AAM65685.1"/>
    <property type="molecule type" value="mRNA"/>
</dbReference>
<dbReference type="PIR" id="H84856">
    <property type="entry name" value="H84856"/>
</dbReference>
<dbReference type="RefSeq" id="NP_565981.1">
    <property type="nucleotide sequence ID" value="NM_129829.4"/>
</dbReference>
<dbReference type="SMR" id="Q9SJI8"/>
<dbReference type="BioGRID" id="4205">
    <property type="interactions" value="6"/>
</dbReference>
<dbReference type="FunCoup" id="Q9SJI8">
    <property type="interactions" value="3642"/>
</dbReference>
<dbReference type="IntAct" id="Q9SJI8">
    <property type="interactions" value="6"/>
</dbReference>
<dbReference type="STRING" id="3702.Q9SJI8"/>
<dbReference type="iPTMnet" id="Q9SJI8"/>
<dbReference type="MetOSite" id="Q9SJI8"/>
<dbReference type="PaxDb" id="3702-AT2G42680.1"/>
<dbReference type="ProteomicsDB" id="250823"/>
<dbReference type="EnsemblPlants" id="AT2G42680.1">
    <property type="protein sequence ID" value="AT2G42680.1"/>
    <property type="gene ID" value="AT2G42680"/>
</dbReference>
<dbReference type="GeneID" id="818868"/>
<dbReference type="Gramene" id="AT2G42680.1">
    <property type="protein sequence ID" value="AT2G42680.1"/>
    <property type="gene ID" value="AT2G42680"/>
</dbReference>
<dbReference type="KEGG" id="ath:AT2G42680"/>
<dbReference type="Araport" id="AT2G42680"/>
<dbReference type="TAIR" id="AT2G42680">
    <property type="gene designation" value="MBF1A"/>
</dbReference>
<dbReference type="eggNOG" id="KOG3398">
    <property type="taxonomic scope" value="Eukaryota"/>
</dbReference>
<dbReference type="HOGENOM" id="CLU_112609_1_0_1"/>
<dbReference type="InParanoid" id="Q9SJI8"/>
<dbReference type="OMA" id="GKNKSCK"/>
<dbReference type="OrthoDB" id="10253401at2759"/>
<dbReference type="PhylomeDB" id="Q9SJI8"/>
<dbReference type="CD-CODE" id="4299E36E">
    <property type="entry name" value="Nucleolus"/>
</dbReference>
<dbReference type="PRO" id="PR:Q9SJI8"/>
<dbReference type="Proteomes" id="UP000006548">
    <property type="component" value="Chromosome 2"/>
</dbReference>
<dbReference type="ExpressionAtlas" id="Q9SJI8">
    <property type="expression patterns" value="baseline and differential"/>
</dbReference>
<dbReference type="GO" id="GO:0005829">
    <property type="term" value="C:cytosol"/>
    <property type="evidence" value="ECO:0007005"/>
    <property type="project" value="TAIR"/>
</dbReference>
<dbReference type="GO" id="GO:0005730">
    <property type="term" value="C:nucleolus"/>
    <property type="evidence" value="ECO:0000314"/>
    <property type="project" value="TAIR"/>
</dbReference>
<dbReference type="GO" id="GO:0003677">
    <property type="term" value="F:DNA binding"/>
    <property type="evidence" value="ECO:0007669"/>
    <property type="project" value="UniProtKB-KW"/>
</dbReference>
<dbReference type="GO" id="GO:0003729">
    <property type="term" value="F:mRNA binding"/>
    <property type="evidence" value="ECO:0000314"/>
    <property type="project" value="TAIR"/>
</dbReference>
<dbReference type="GO" id="GO:0003713">
    <property type="term" value="F:transcription coactivator activity"/>
    <property type="evidence" value="ECO:0000316"/>
    <property type="project" value="TAIR"/>
</dbReference>
<dbReference type="GO" id="GO:0045893">
    <property type="term" value="P:positive regulation of DNA-templated transcription"/>
    <property type="evidence" value="ECO:0000304"/>
    <property type="project" value="TAIR"/>
</dbReference>
<dbReference type="CDD" id="cd00093">
    <property type="entry name" value="HTH_XRE"/>
    <property type="match status" value="1"/>
</dbReference>
<dbReference type="FunFam" id="1.10.260.40:FF:000018">
    <property type="entry name" value="Multiprotein bridging factor 1"/>
    <property type="match status" value="1"/>
</dbReference>
<dbReference type="Gene3D" id="1.10.260.40">
    <property type="entry name" value="lambda repressor-like DNA-binding domains"/>
    <property type="match status" value="1"/>
</dbReference>
<dbReference type="InterPro" id="IPR001387">
    <property type="entry name" value="Cro/C1-type_HTH"/>
</dbReference>
<dbReference type="InterPro" id="IPR010982">
    <property type="entry name" value="Lambda_DNA-bd_dom_sf"/>
</dbReference>
<dbReference type="InterPro" id="IPR013729">
    <property type="entry name" value="MBF1_N"/>
</dbReference>
<dbReference type="PANTHER" id="PTHR10245">
    <property type="entry name" value="ENDOTHELIAL DIFFERENTIATION-RELATED FACTOR 1 MULTIPROTEIN BRIDGING FACTOR 1"/>
    <property type="match status" value="1"/>
</dbReference>
<dbReference type="PANTHER" id="PTHR10245:SF114">
    <property type="entry name" value="MULTIPROTEIN-BRIDGING FACTOR 1A"/>
    <property type="match status" value="1"/>
</dbReference>
<dbReference type="Pfam" id="PF01381">
    <property type="entry name" value="HTH_3"/>
    <property type="match status" value="1"/>
</dbReference>
<dbReference type="Pfam" id="PF08523">
    <property type="entry name" value="MBF1"/>
    <property type="match status" value="1"/>
</dbReference>
<dbReference type="SMART" id="SM00530">
    <property type="entry name" value="HTH_XRE"/>
    <property type="match status" value="1"/>
</dbReference>
<dbReference type="SUPFAM" id="SSF47413">
    <property type="entry name" value="lambda repressor-like DNA-binding domains"/>
    <property type="match status" value="1"/>
</dbReference>
<dbReference type="PROSITE" id="PS50943">
    <property type="entry name" value="HTH_CROC1"/>
    <property type="match status" value="1"/>
</dbReference>
<organism>
    <name type="scientific">Arabidopsis thaliana</name>
    <name type="common">Mouse-ear cress</name>
    <dbReference type="NCBI Taxonomy" id="3702"/>
    <lineage>
        <taxon>Eukaryota</taxon>
        <taxon>Viridiplantae</taxon>
        <taxon>Streptophyta</taxon>
        <taxon>Embryophyta</taxon>
        <taxon>Tracheophyta</taxon>
        <taxon>Spermatophyta</taxon>
        <taxon>Magnoliopsida</taxon>
        <taxon>eudicotyledons</taxon>
        <taxon>Gunneridae</taxon>
        <taxon>Pentapetalae</taxon>
        <taxon>rosids</taxon>
        <taxon>malvids</taxon>
        <taxon>Brassicales</taxon>
        <taxon>Brassicaceae</taxon>
        <taxon>Camelineae</taxon>
        <taxon>Arabidopsis</taxon>
    </lineage>
</organism>